<organism>
    <name type="scientific">Mycobacterium tuberculosis (strain CDC 1551 / Oshkosh)</name>
    <dbReference type="NCBI Taxonomy" id="83331"/>
    <lineage>
        <taxon>Bacteria</taxon>
        <taxon>Bacillati</taxon>
        <taxon>Actinomycetota</taxon>
        <taxon>Actinomycetes</taxon>
        <taxon>Mycobacteriales</taxon>
        <taxon>Mycobacteriaceae</taxon>
        <taxon>Mycobacterium</taxon>
        <taxon>Mycobacterium tuberculosis complex</taxon>
    </lineage>
</organism>
<evidence type="ECO:0000250" key="1"/>
<evidence type="ECO:0000255" key="2">
    <source>
        <dbReference type="PROSITE-ProRule" id="PRU00543"/>
    </source>
</evidence>
<evidence type="ECO:0000255" key="3">
    <source>
        <dbReference type="PROSITE-ProRule" id="PRU00544"/>
    </source>
</evidence>
<keyword id="KW-0406">Ion transport</keyword>
<keyword id="KW-0520">NAD</keyword>
<keyword id="KW-0630">Potassium</keyword>
<keyword id="KW-0633">Potassium transport</keyword>
<keyword id="KW-1185">Reference proteome</keyword>
<keyword id="KW-0813">Transport</keyword>
<protein>
    <recommendedName>
        <fullName>Trk system potassium uptake protein TrkA</fullName>
        <shortName>K(+)-uptake protein TrkA</shortName>
    </recommendedName>
</protein>
<comment type="function">
    <text evidence="1">Part of a potassium transport system.</text>
</comment>
<comment type="domain">
    <text evidence="1">The RCK N-terminal domain binds NAD and possibly other effectors. This is expected to cause a conformation change that regulates potassium transport (By similarity).</text>
</comment>
<name>TRKA_MYCTO</name>
<dbReference type="EMBL" id="AE000516">
    <property type="protein sequence ID" value="AAK47081.1"/>
    <property type="molecule type" value="Genomic_DNA"/>
</dbReference>
<dbReference type="PIR" id="G70529">
    <property type="entry name" value="G70529"/>
</dbReference>
<dbReference type="RefSeq" id="WP_003899435.1">
    <property type="nucleotide sequence ID" value="NZ_KK341227.1"/>
</dbReference>
<dbReference type="SMR" id="P9WFZ2"/>
<dbReference type="KEGG" id="mtc:MT2766"/>
<dbReference type="PATRIC" id="fig|83331.31.peg.2979"/>
<dbReference type="HOGENOM" id="CLU_046525_2_0_11"/>
<dbReference type="Proteomes" id="UP000001020">
    <property type="component" value="Chromosome"/>
</dbReference>
<dbReference type="GO" id="GO:0005886">
    <property type="term" value="C:plasma membrane"/>
    <property type="evidence" value="ECO:0007669"/>
    <property type="project" value="InterPro"/>
</dbReference>
<dbReference type="GO" id="GO:0015079">
    <property type="term" value="F:potassium ion transmembrane transporter activity"/>
    <property type="evidence" value="ECO:0007669"/>
    <property type="project" value="InterPro"/>
</dbReference>
<dbReference type="FunFam" id="3.30.70.1450:FF:000012">
    <property type="entry name" value="Trk system potassium uptake protein TrkA"/>
    <property type="match status" value="1"/>
</dbReference>
<dbReference type="Gene3D" id="3.40.50.720">
    <property type="entry name" value="NAD(P)-binding Rossmann-like Domain"/>
    <property type="match status" value="1"/>
</dbReference>
<dbReference type="Gene3D" id="3.30.70.1450">
    <property type="entry name" value="Regulator of K+ conductance, C-terminal domain"/>
    <property type="match status" value="1"/>
</dbReference>
<dbReference type="InterPro" id="IPR006036">
    <property type="entry name" value="K_uptake_TrkA"/>
</dbReference>
<dbReference type="InterPro" id="IPR036291">
    <property type="entry name" value="NAD(P)-bd_dom_sf"/>
</dbReference>
<dbReference type="InterPro" id="IPR006037">
    <property type="entry name" value="RCK_C"/>
</dbReference>
<dbReference type="InterPro" id="IPR036721">
    <property type="entry name" value="RCK_C_sf"/>
</dbReference>
<dbReference type="InterPro" id="IPR003148">
    <property type="entry name" value="RCK_N"/>
</dbReference>
<dbReference type="InterPro" id="IPR050721">
    <property type="entry name" value="Trk_Ktr_HKT_K-transport"/>
</dbReference>
<dbReference type="PANTHER" id="PTHR43833">
    <property type="entry name" value="POTASSIUM CHANNEL PROTEIN 2-RELATED-RELATED"/>
    <property type="match status" value="1"/>
</dbReference>
<dbReference type="PANTHER" id="PTHR43833:SF5">
    <property type="entry name" value="TRK SYSTEM POTASSIUM UPTAKE PROTEIN TRKA"/>
    <property type="match status" value="1"/>
</dbReference>
<dbReference type="Pfam" id="PF02080">
    <property type="entry name" value="TrkA_C"/>
    <property type="match status" value="1"/>
</dbReference>
<dbReference type="Pfam" id="PF02254">
    <property type="entry name" value="TrkA_N"/>
    <property type="match status" value="1"/>
</dbReference>
<dbReference type="PRINTS" id="PR00335">
    <property type="entry name" value="KUPTAKETRKA"/>
</dbReference>
<dbReference type="SUPFAM" id="SSF51735">
    <property type="entry name" value="NAD(P)-binding Rossmann-fold domains"/>
    <property type="match status" value="1"/>
</dbReference>
<dbReference type="SUPFAM" id="SSF116726">
    <property type="entry name" value="TrkA C-terminal domain-like"/>
    <property type="match status" value="1"/>
</dbReference>
<dbReference type="PROSITE" id="PS51202">
    <property type="entry name" value="RCK_C"/>
    <property type="match status" value="1"/>
</dbReference>
<dbReference type="PROSITE" id="PS51201">
    <property type="entry name" value="RCK_N"/>
    <property type="match status" value="1"/>
</dbReference>
<feature type="chain" id="PRO_0000428452" description="Trk system potassium uptake protein TrkA">
    <location>
        <begin position="1"/>
        <end position="220"/>
    </location>
</feature>
<feature type="domain" description="RCK N-terminal" evidence="2">
    <location>
        <begin position="1"/>
        <end position="117"/>
    </location>
</feature>
<feature type="domain" description="RCK C-terminal" evidence="3">
    <location>
        <begin position="137"/>
        <end position="218"/>
    </location>
</feature>
<feature type="binding site" description="in other chain" evidence="1">
    <location>
        <begin position="7"/>
        <end position="11"/>
    </location>
    <ligand>
        <name>NAD(+)</name>
        <dbReference type="ChEBI" id="CHEBI:57540"/>
        <note>ligand shared between dimeric partners</note>
    </ligand>
</feature>
<feature type="binding site" description="in other chain" evidence="1">
    <location>
        <position position="30"/>
    </location>
    <ligand>
        <name>NAD(+)</name>
        <dbReference type="ChEBI" id="CHEBI:57540"/>
        <note>ligand shared between dimeric partners</note>
    </ligand>
</feature>
<feature type="binding site" description="in other chain" evidence="1">
    <location>
        <position position="50"/>
    </location>
    <ligand>
        <name>NAD(+)</name>
        <dbReference type="ChEBI" id="CHEBI:57540"/>
        <note>ligand shared between dimeric partners</note>
    </ligand>
</feature>
<feature type="binding site" description="in other chain" evidence="1">
    <location>
        <begin position="72"/>
        <end position="73"/>
    </location>
    <ligand>
        <name>NAD(+)</name>
        <dbReference type="ChEBI" id="CHEBI:57540"/>
        <note>ligand shared between dimeric partners</note>
    </ligand>
</feature>
<feature type="binding site" evidence="1">
    <location>
        <position position="97"/>
    </location>
    <ligand>
        <name>NAD(+)</name>
        <dbReference type="ChEBI" id="CHEBI:57540"/>
        <note>ligand shared between dimeric partners</note>
    </ligand>
</feature>
<accession>P9WFZ2</accession>
<accession>L0TAC9</accession>
<accession>O07194</accession>
<proteinExistence type="inferred from homology"/>
<reference key="1">
    <citation type="journal article" date="2002" name="J. Bacteriol.">
        <title>Whole-genome comparison of Mycobacterium tuberculosis clinical and laboratory strains.</title>
        <authorList>
            <person name="Fleischmann R.D."/>
            <person name="Alland D."/>
            <person name="Eisen J.A."/>
            <person name="Carpenter L."/>
            <person name="White O."/>
            <person name="Peterson J.D."/>
            <person name="DeBoy R.T."/>
            <person name="Dodson R.J."/>
            <person name="Gwinn M.L."/>
            <person name="Haft D.H."/>
            <person name="Hickey E.K."/>
            <person name="Kolonay J.F."/>
            <person name="Nelson W.C."/>
            <person name="Umayam L.A."/>
            <person name="Ermolaeva M.D."/>
            <person name="Salzberg S.L."/>
            <person name="Delcher A."/>
            <person name="Utterback T.R."/>
            <person name="Weidman J.F."/>
            <person name="Khouri H.M."/>
            <person name="Gill J."/>
            <person name="Mikula A."/>
            <person name="Bishai W."/>
            <person name="Jacobs W.R. Jr."/>
            <person name="Venter J.C."/>
            <person name="Fraser C.M."/>
        </authorList>
    </citation>
    <scope>NUCLEOTIDE SEQUENCE [LARGE SCALE GENOMIC DNA]</scope>
    <source>
        <strain>CDC 1551 / Oshkosh</strain>
    </source>
</reference>
<sequence>MKVAVAGAGAVGRSVTRELVENGHDITLIERNPDHLDAAAIPEAHWRLGDACELSLLESIHLEEFDVVVAATGDDKVNVVLSLLAKTEFAVPRVVARVNDPRNEWLFNDAWGVDVAVSTPRMLASLIEEAVTIGDLVRLMEFRTGQANLVEITLPDNTPWGGKPVRKLQLPRDAALVTILRGPRVIVPEADEPLEGGDELLFVAVTEAEEELSRLLLPSM</sequence>
<gene>
    <name type="primary">trkA</name>
    <name type="synonym">ceoC</name>
    <name type="ordered locus">MT2766</name>
</gene>